<feature type="chain" id="PRO_0000338565" description="Myosin-3">
    <location>
        <begin position="1"/>
        <end position="1270"/>
    </location>
</feature>
<feature type="domain" description="Myosin motor" evidence="5">
    <location>
        <begin position="36"/>
        <end position="715"/>
    </location>
</feature>
<feature type="domain" description="IQ 1">
    <location>
        <begin position="719"/>
        <end position="739"/>
    </location>
</feature>
<feature type="domain" description="IQ 2">
    <location>
        <begin position="740"/>
        <end position="765"/>
    </location>
</feature>
<feature type="domain" description="TH1" evidence="6">
    <location>
        <begin position="771"/>
        <end position="961"/>
    </location>
</feature>
<feature type="domain" description="SH3" evidence="4">
    <location>
        <begin position="1118"/>
        <end position="1180"/>
    </location>
</feature>
<feature type="region of interest" description="Disordered" evidence="7">
    <location>
        <begin position="1"/>
        <end position="20"/>
    </location>
</feature>
<feature type="region of interest" description="Actin-binding" evidence="1">
    <location>
        <begin position="404"/>
        <end position="486"/>
    </location>
</feature>
<feature type="region of interest" description="Disordered" evidence="7">
    <location>
        <begin position="951"/>
        <end position="1015"/>
    </location>
</feature>
<feature type="region of interest" description="Disordered" evidence="7">
    <location>
        <begin position="1029"/>
        <end position="1136"/>
    </location>
</feature>
<feature type="region of interest" description="Disordered" evidence="7">
    <location>
        <begin position="1215"/>
        <end position="1270"/>
    </location>
</feature>
<feature type="compositionally biased region" description="Basic residues" evidence="7">
    <location>
        <begin position="980"/>
        <end position="1000"/>
    </location>
</feature>
<feature type="compositionally biased region" description="Low complexity" evidence="7">
    <location>
        <begin position="1066"/>
        <end position="1078"/>
    </location>
</feature>
<feature type="compositionally biased region" description="Basic and acidic residues" evidence="7">
    <location>
        <begin position="1089"/>
        <end position="1098"/>
    </location>
</feature>
<feature type="compositionally biased region" description="Pro residues" evidence="7">
    <location>
        <begin position="1107"/>
        <end position="1116"/>
    </location>
</feature>
<feature type="compositionally biased region" description="Polar residues" evidence="7">
    <location>
        <begin position="1215"/>
        <end position="1234"/>
    </location>
</feature>
<feature type="compositionally biased region" description="Acidic residues" evidence="7">
    <location>
        <begin position="1256"/>
        <end position="1270"/>
    </location>
</feature>
<feature type="binding site" evidence="3">
    <location>
        <begin position="129"/>
        <end position="136"/>
    </location>
    <ligand>
        <name>ATP</name>
        <dbReference type="ChEBI" id="CHEBI:30616"/>
    </ligand>
</feature>
<feature type="modified residue" description="Phosphoserine" evidence="2">
    <location>
        <position position="357"/>
    </location>
</feature>
<organism>
    <name type="scientific">Saccharomyces cerevisiae (strain YJM789)</name>
    <name type="common">Baker's yeast</name>
    <dbReference type="NCBI Taxonomy" id="307796"/>
    <lineage>
        <taxon>Eukaryota</taxon>
        <taxon>Fungi</taxon>
        <taxon>Dikarya</taxon>
        <taxon>Ascomycota</taxon>
        <taxon>Saccharomycotina</taxon>
        <taxon>Saccharomycetes</taxon>
        <taxon>Saccharomycetales</taxon>
        <taxon>Saccharomycetaceae</taxon>
        <taxon>Saccharomyces</taxon>
    </lineage>
</organism>
<dbReference type="EMBL" id="AAFW02000151">
    <property type="protein sequence ID" value="EDN60039.1"/>
    <property type="molecule type" value="Genomic_DNA"/>
</dbReference>
<dbReference type="BMRB" id="A6ZZJ1"/>
<dbReference type="SMR" id="A6ZZJ1"/>
<dbReference type="HOGENOM" id="CLU_000192_7_6_1"/>
<dbReference type="Proteomes" id="UP000007060">
    <property type="component" value="Unassembled WGS sequence"/>
</dbReference>
<dbReference type="GO" id="GO:0030479">
    <property type="term" value="C:actin cortical patch"/>
    <property type="evidence" value="ECO:0007669"/>
    <property type="project" value="UniProtKB-SubCell"/>
</dbReference>
<dbReference type="GO" id="GO:0051286">
    <property type="term" value="C:cell tip"/>
    <property type="evidence" value="ECO:0007669"/>
    <property type="project" value="TreeGrafter"/>
</dbReference>
<dbReference type="GO" id="GO:0016459">
    <property type="term" value="C:myosin complex"/>
    <property type="evidence" value="ECO:0007669"/>
    <property type="project" value="UniProtKB-KW"/>
</dbReference>
<dbReference type="GO" id="GO:0005886">
    <property type="term" value="C:plasma membrane"/>
    <property type="evidence" value="ECO:0007669"/>
    <property type="project" value="TreeGrafter"/>
</dbReference>
<dbReference type="GO" id="GO:0051015">
    <property type="term" value="F:actin filament binding"/>
    <property type="evidence" value="ECO:0007669"/>
    <property type="project" value="TreeGrafter"/>
</dbReference>
<dbReference type="GO" id="GO:0005524">
    <property type="term" value="F:ATP binding"/>
    <property type="evidence" value="ECO:0007669"/>
    <property type="project" value="UniProtKB-KW"/>
</dbReference>
<dbReference type="GO" id="GO:0016787">
    <property type="term" value="F:hydrolase activity"/>
    <property type="evidence" value="ECO:0007669"/>
    <property type="project" value="UniProtKB-KW"/>
</dbReference>
<dbReference type="GO" id="GO:0000146">
    <property type="term" value="F:microfilament motor activity"/>
    <property type="evidence" value="ECO:0007669"/>
    <property type="project" value="TreeGrafter"/>
</dbReference>
<dbReference type="GO" id="GO:0051666">
    <property type="term" value="P:actin cortical patch localization"/>
    <property type="evidence" value="ECO:0007669"/>
    <property type="project" value="TreeGrafter"/>
</dbReference>
<dbReference type="GO" id="GO:0007015">
    <property type="term" value="P:actin filament organization"/>
    <property type="evidence" value="ECO:0007669"/>
    <property type="project" value="TreeGrafter"/>
</dbReference>
<dbReference type="GO" id="GO:0006897">
    <property type="term" value="P:endocytosis"/>
    <property type="evidence" value="ECO:0007669"/>
    <property type="project" value="TreeGrafter"/>
</dbReference>
<dbReference type="CDD" id="cd01378">
    <property type="entry name" value="MYSc_Myo1"/>
    <property type="match status" value="1"/>
</dbReference>
<dbReference type="CDD" id="cd11858">
    <property type="entry name" value="SH3_Myosin-I_fungi"/>
    <property type="match status" value="1"/>
</dbReference>
<dbReference type="FunFam" id="1.10.10.820:FF:000001">
    <property type="entry name" value="Myosin heavy chain"/>
    <property type="match status" value="1"/>
</dbReference>
<dbReference type="FunFam" id="1.20.120.720:FF:000015">
    <property type="entry name" value="Myosin I"/>
    <property type="match status" value="1"/>
</dbReference>
<dbReference type="FunFam" id="2.30.30.40:FF:000254">
    <property type="entry name" value="Myosin I MyoA/Myo5"/>
    <property type="match status" value="1"/>
</dbReference>
<dbReference type="FunFam" id="1.20.5.4820:FF:000004">
    <property type="entry name" value="Myosin IE"/>
    <property type="match status" value="1"/>
</dbReference>
<dbReference type="FunFam" id="1.20.58.530:FF:000007">
    <property type="entry name" value="Myosin IE"/>
    <property type="match status" value="1"/>
</dbReference>
<dbReference type="Gene3D" id="1.10.10.820">
    <property type="match status" value="1"/>
</dbReference>
<dbReference type="Gene3D" id="1.20.5.4820">
    <property type="match status" value="1"/>
</dbReference>
<dbReference type="Gene3D" id="1.20.58.530">
    <property type="match status" value="1"/>
</dbReference>
<dbReference type="Gene3D" id="3.40.850.10">
    <property type="entry name" value="Kinesin motor domain"/>
    <property type="match status" value="1"/>
</dbReference>
<dbReference type="Gene3D" id="1.20.120.720">
    <property type="entry name" value="Myosin VI head, motor domain, U50 subdomain"/>
    <property type="match status" value="1"/>
</dbReference>
<dbReference type="Gene3D" id="2.30.30.40">
    <property type="entry name" value="SH3 Domains"/>
    <property type="match status" value="1"/>
</dbReference>
<dbReference type="InterPro" id="IPR035535">
    <property type="entry name" value="Fungal_myosin-I_SH3"/>
</dbReference>
<dbReference type="InterPro" id="IPR036961">
    <property type="entry name" value="Kinesin_motor_dom_sf"/>
</dbReference>
<dbReference type="InterPro" id="IPR001609">
    <property type="entry name" value="Myosin_head_motor_dom-like"/>
</dbReference>
<dbReference type="InterPro" id="IPR010926">
    <property type="entry name" value="Myosin_TH1"/>
</dbReference>
<dbReference type="InterPro" id="IPR036072">
    <property type="entry name" value="MYSc_Myo1"/>
</dbReference>
<dbReference type="InterPro" id="IPR027417">
    <property type="entry name" value="P-loop_NTPase"/>
</dbReference>
<dbReference type="InterPro" id="IPR036028">
    <property type="entry name" value="SH3-like_dom_sf"/>
</dbReference>
<dbReference type="InterPro" id="IPR001452">
    <property type="entry name" value="SH3_domain"/>
</dbReference>
<dbReference type="PANTHER" id="PTHR13140">
    <property type="entry name" value="MYOSIN"/>
    <property type="match status" value="1"/>
</dbReference>
<dbReference type="PANTHER" id="PTHR13140:SF837">
    <property type="entry name" value="MYOSIN-3-RELATED"/>
    <property type="match status" value="1"/>
</dbReference>
<dbReference type="Pfam" id="PF00063">
    <property type="entry name" value="Myosin_head"/>
    <property type="match status" value="1"/>
</dbReference>
<dbReference type="Pfam" id="PF06017">
    <property type="entry name" value="Myosin_TH1"/>
    <property type="match status" value="1"/>
</dbReference>
<dbReference type="Pfam" id="PF00018">
    <property type="entry name" value="SH3_1"/>
    <property type="match status" value="1"/>
</dbReference>
<dbReference type="PRINTS" id="PR00193">
    <property type="entry name" value="MYOSINHEAVY"/>
</dbReference>
<dbReference type="SMART" id="SM00242">
    <property type="entry name" value="MYSc"/>
    <property type="match status" value="1"/>
</dbReference>
<dbReference type="SMART" id="SM00326">
    <property type="entry name" value="SH3"/>
    <property type="match status" value="1"/>
</dbReference>
<dbReference type="SUPFAM" id="SSF52540">
    <property type="entry name" value="P-loop containing nucleoside triphosphate hydrolases"/>
    <property type="match status" value="1"/>
</dbReference>
<dbReference type="SUPFAM" id="SSF50044">
    <property type="entry name" value="SH3-domain"/>
    <property type="match status" value="1"/>
</dbReference>
<dbReference type="PROSITE" id="PS51456">
    <property type="entry name" value="MYOSIN_MOTOR"/>
    <property type="match status" value="1"/>
</dbReference>
<dbReference type="PROSITE" id="PS50002">
    <property type="entry name" value="SH3"/>
    <property type="match status" value="1"/>
</dbReference>
<dbReference type="PROSITE" id="PS51757">
    <property type="entry name" value="TH1"/>
    <property type="match status" value="1"/>
</dbReference>
<name>MYO3_YEAS7</name>
<protein>
    <recommendedName>
        <fullName>Myosin-3</fullName>
    </recommendedName>
    <alternativeName>
        <fullName>Actin-dependent myosin-I MYO3</fullName>
    </alternativeName>
    <alternativeName>
        <fullName>Class I unconventional myosin MYO3</fullName>
    </alternativeName>
    <alternativeName>
        <fullName>Type I myosin MYO3</fullName>
    </alternativeName>
</protein>
<proteinExistence type="inferred from homology"/>
<evidence type="ECO:0000250" key="1"/>
<evidence type="ECO:0000250" key="2">
    <source>
        <dbReference type="UniProtKB" id="P36006"/>
    </source>
</evidence>
<evidence type="ECO:0000255" key="3"/>
<evidence type="ECO:0000255" key="4">
    <source>
        <dbReference type="PROSITE-ProRule" id="PRU00192"/>
    </source>
</evidence>
<evidence type="ECO:0000255" key="5">
    <source>
        <dbReference type="PROSITE-ProRule" id="PRU00782"/>
    </source>
</evidence>
<evidence type="ECO:0000255" key="6">
    <source>
        <dbReference type="PROSITE-ProRule" id="PRU01093"/>
    </source>
</evidence>
<evidence type="ECO:0000256" key="7">
    <source>
        <dbReference type="SAM" id="MobiDB-lite"/>
    </source>
</evidence>
<evidence type="ECO:0000305" key="8"/>
<reference key="1">
    <citation type="journal article" date="2007" name="Proc. Natl. Acad. Sci. U.S.A.">
        <title>Genome sequencing and comparative analysis of Saccharomyces cerevisiae strain YJM789.</title>
        <authorList>
            <person name="Wei W."/>
            <person name="McCusker J.H."/>
            <person name="Hyman R.W."/>
            <person name="Jones T."/>
            <person name="Ning Y."/>
            <person name="Cao Z."/>
            <person name="Gu Z."/>
            <person name="Bruno D."/>
            <person name="Miranda M."/>
            <person name="Nguyen M."/>
            <person name="Wilhelmy J."/>
            <person name="Komp C."/>
            <person name="Tamse R."/>
            <person name="Wang X."/>
            <person name="Jia P."/>
            <person name="Luedi P."/>
            <person name="Oefner P.J."/>
            <person name="David L."/>
            <person name="Dietrich F.S."/>
            <person name="Li Y."/>
            <person name="Davis R.W."/>
            <person name="Steinmetz L.M."/>
        </authorList>
    </citation>
    <scope>NUCLEOTIDE SEQUENCE [LARGE SCALE GENOMIC DNA]</scope>
    <source>
        <strain>YJM789</strain>
    </source>
</reference>
<comment type="function">
    <text evidence="1">One of two redundant type-I myosins implicated in the organization of the actin cytoskeleton. Required for proper actin cytoskeleton polarization and for the internalization step in endocytosis. At the cell cortex, assembles in patch-like structures together with proteins from the actin-polymerizing machinery and promotes actin assembly. Functions redundantly with LAS17 as actin nucleation-promoting factor (NPF) for the Arp2/3 complex. Motor domain phosphorylation by PAK kinases CLA4 and STE20 promotes CDC42-regulated actin assembly. Functions together with the NPF PAN1 in late stages of endocytosis. Motor domain phosphorylation by PDK1 kinases PKH1 and PKH2, and by SGK kinases YPK1 and YPK2, promotes ligand-induced, but not constitutive endocytosis of the G protein-coupled receptor STE2 (By similarity).</text>
</comment>
<comment type="subunit">
    <text evidence="1">Interacts (via myosin motor domain) with SHE4; this interaction is important for proper localization and may regulate the interaction of the motor domain with actin. Interacts (via SH3 domain) with VRP1; this interaction is required for localization to sites of polarized growth and may regulate the interaction of the tail domain with actin. Interacts (via SH3 domain) with PAN1; this interaction is important for late stages of endocytopsis. Interacts (via SH3 domain) with BBC1 and LAS17. Interacts (via C-terminal acidic tail) with ARC19 and ARC40; ARC19 and ARC40 are Arp2/3 complex subunits (By similarity).</text>
</comment>
<comment type="subcellular location">
    <subcellularLocation>
        <location evidence="1">Cytoplasm</location>
        <location evidence="1">Cytoskeleton</location>
        <location evidence="1">Actin patch</location>
    </subcellularLocation>
    <text evidence="1">Localizes to cortical patch-like protein structures that assemble actin patches. Enriched at sites of polarized growth (By similarity).</text>
</comment>
<comment type="domain">
    <text evidence="1">The myosin motor domain displays actin-stimulated ATPase activity and generates a mechanochemical force.</text>
</comment>
<comment type="domain">
    <text evidence="1">The tail domain participates in molecular interactions that specify the role of the motor domain (By similarity). It is composed of several tail homology (TH) domains, namely a putative phospholipid-binding myosin tail domain (also named TH1), an Ala- and Pro-rich domain (TH2), followed by an SH3 domain and a C-terminal acidic domain (TH3).</text>
</comment>
<comment type="PTM">
    <text evidence="1">Phosphorylation of the TEDS site (Ser-357) is required for the polarization of the actin cytoskeleton and for ligand-induced, but not for constitutive internalization of STE2. Phosphorylation probably activates the myosin-I ATPase (By similarity). Ser-357 is phosphorylated by CLA4 and STE20 in vitro (By similarity).</text>
</comment>
<comment type="similarity">
    <text evidence="8">Belongs to the TRAFAC class myosin-kinesin ATPase superfamily. Myosin family.</text>
</comment>
<sequence length="1270" mass="142333">MAVIKKGARRKDVKEPKKRSAKIKKATFDANKKKEVGVSDLTLLSKISDESINENLKKRFKNGIIYTYIGHVLISVNPFRDLGIYTNAVLESYKGKNRLEVPPHVFAIAESMYYNLKSYNENQCVIISGESGAGKTEAAKRIMQYIAAASNSHSESIGKIKDMVLATNPLLESFGCAKTLRNNNSSRHGKYLEIKFNSQFEPCAGNITNYLLEKQRVVSQIKNERNFHIFYQFTKGASDTYRQMFGVQMPEQYIYTAAAGCTTADTIDDVKDYEGTLEAMRTIGLVQEEQDQIFRMLAAILWIGNISFIENEEGNAQVGDTSVTDFVAYLLQVDASLLVKCLVERIMQTSHGMKRGSVYHVPLNPVQATAVRDALAKAIYNNLFDWIVDRVNVSLQAFPGADKSIGILDIYGFEIFEHNSFEQICINYVNEKLQQIFIQLTLKAEQETYEREKIKWTPIKYFDNKVVCDLIEAKNPPGILAAMNDSIATAHADSNAADQAFAQRLNLFNSNPYFELRANKFVIKHYAGDVTYDINGITDKNKDQLQKDLIELIGTTTNTFLSTIFPDDVDKDSKRRPPTAGDKIIKSANELVETLSKAEPSYIRTIKPNQTKSPNDYDDHQVLHQVKYLGLQENVRIRRAGFAYRQTFEKFVERFYLLSPDCSYAGDYTWDGDTLEAVKLILRDAMIPEKEFQLGVTSVFIKTPESLFALEDMRDKYWYNMAARIQRAWRRFLQRRIDAAIKIQRTIREKKGGNKYVKLRDYGTKLLAGKKERRSMSLLGYRAFMGDYLSCNESKTKGSYIRRQVGIKDKVVFSIKGECLHSKFGRSAQRLKKVFILTKKTFYIIGQTREQNAMKYTQDYKIDVGKIKQVSLTNLQDDWMGVILVNSTQPDPLINTPFKTELMTRLKKLNEKIMIKVGPTIEYHKQPNKLHTVRSKISDSAPKYGDIYKSSTIYVRRGHPANSKSNKKPKNPGGLSGKPIKSKKSKHKSTHKHTHSHRSHRDAAKKQPLPSQKPVNPLSLAATAAQAAYNPKPDKTVPIKSSAIPAAKVSSKHSSKPSSKEKVAVKKASSSHKSSSAKQNQVSMPPSKGVEKNKEPLKETTATANIPIPPPPPPMGQPKDPKFEAAYDFPGSGSSSELPLKKGDIVFISRDEPSGWSLAKLLDGSKEGWVPTAYMTPYKDTRNTVPVAATGAVNDVTNQKSSQIDNTISSAQEGVQFGSATVGPTSDNQSNPVGTFSDGLASALAARANKMRAESADDDDNDDGDDDDDW</sequence>
<accession>A6ZZJ1</accession>
<keyword id="KW-0009">Actin-binding</keyword>
<keyword id="KW-0067">ATP-binding</keyword>
<keyword id="KW-0963">Cytoplasm</keyword>
<keyword id="KW-0206">Cytoskeleton</keyword>
<keyword id="KW-0378">Hydrolase</keyword>
<keyword id="KW-0505">Motor protein</keyword>
<keyword id="KW-0518">Myosin</keyword>
<keyword id="KW-0547">Nucleotide-binding</keyword>
<keyword id="KW-0597">Phosphoprotein</keyword>
<keyword id="KW-0677">Repeat</keyword>
<keyword id="KW-0728">SH3 domain</keyword>
<gene>
    <name type="primary">MYO3</name>
    <name type="ORF">SCY_3251</name>
</gene>